<protein>
    <recommendedName>
        <fullName>16S rRNA (adenine(1408)-N(1))-methyltransferase</fullName>
        <ecNumber>2.1.1.180</ecNumber>
    </recommendedName>
    <alternativeName>
        <fullName>16S rRNA m1A1408 methyltransferase</fullName>
    </alternativeName>
</protein>
<name>NPMA_ECOLX</name>
<organism>
    <name type="scientific">Escherichia coli</name>
    <dbReference type="NCBI Taxonomy" id="562"/>
    <lineage>
        <taxon>Bacteria</taxon>
        <taxon>Pseudomonadati</taxon>
        <taxon>Pseudomonadota</taxon>
        <taxon>Gammaproteobacteria</taxon>
        <taxon>Enterobacterales</taxon>
        <taxon>Enterobacteriaceae</taxon>
        <taxon>Escherichia</taxon>
    </lineage>
</organism>
<keyword id="KW-0002">3D-structure</keyword>
<keyword id="KW-0046">Antibiotic resistance</keyword>
<keyword id="KW-0903">Direct protein sequencing</keyword>
<keyword id="KW-0489">Methyltransferase</keyword>
<keyword id="KW-0614">Plasmid</keyword>
<keyword id="KW-0949">S-adenosyl-L-methionine</keyword>
<keyword id="KW-0808">Transferase</keyword>
<dbReference type="EC" id="2.1.1.180"/>
<dbReference type="EMBL" id="AB261016">
    <property type="protein sequence ID" value="BAF80809.1"/>
    <property type="molecule type" value="Genomic_DNA"/>
</dbReference>
<dbReference type="RefSeq" id="WP_032492089.1">
    <property type="nucleotide sequence ID" value="NG_048018.1"/>
</dbReference>
<dbReference type="PDB" id="3MTE">
    <property type="method" value="X-ray"/>
    <property type="resolution" value="1.80 A"/>
    <property type="chains" value="A/B=1-219"/>
</dbReference>
<dbReference type="PDB" id="3P2E">
    <property type="method" value="X-ray"/>
    <property type="resolution" value="1.68 A"/>
    <property type="chains" value="A/B=1-219"/>
</dbReference>
<dbReference type="PDB" id="3P2I">
    <property type="method" value="X-ray"/>
    <property type="resolution" value="2.40 A"/>
    <property type="chains" value="A/B=1-219"/>
</dbReference>
<dbReference type="PDB" id="3P2K">
    <property type="method" value="X-ray"/>
    <property type="resolution" value="2.70 A"/>
    <property type="chains" value="A/B/C/D=1-219"/>
</dbReference>
<dbReference type="PDB" id="3PB3">
    <property type="method" value="X-ray"/>
    <property type="resolution" value="1.90 A"/>
    <property type="chains" value="A/B=1-219"/>
</dbReference>
<dbReference type="PDB" id="4OX9">
    <property type="method" value="X-ray"/>
    <property type="resolution" value="3.80 A"/>
    <property type="chains" value="Y=1-219"/>
</dbReference>
<dbReference type="PDBsum" id="3MTE"/>
<dbReference type="PDBsum" id="3P2E"/>
<dbReference type="PDBsum" id="3P2I"/>
<dbReference type="PDBsum" id="3P2K"/>
<dbReference type="PDBsum" id="3PB3"/>
<dbReference type="PDBsum" id="4OX9"/>
<dbReference type="SMR" id="A8C927"/>
<dbReference type="CARD" id="ARO:3002665">
    <property type="molecule name" value="npmA"/>
    <property type="mechanism identifier" value="ARO:0001001"/>
    <property type="mechanism name" value="antibiotic target alteration"/>
</dbReference>
<dbReference type="KEGG" id="ag:BAF80809"/>
<dbReference type="BRENDA" id="2.1.1.180">
    <property type="organism ID" value="2026"/>
</dbReference>
<dbReference type="EvolutionaryTrace" id="A8C927"/>
<dbReference type="GO" id="GO:0008168">
    <property type="term" value="F:methyltransferase activity"/>
    <property type="evidence" value="ECO:0007669"/>
    <property type="project" value="UniProtKB-KW"/>
</dbReference>
<dbReference type="GO" id="GO:0032259">
    <property type="term" value="P:methylation"/>
    <property type="evidence" value="ECO:0007669"/>
    <property type="project" value="UniProtKB-KW"/>
</dbReference>
<dbReference type="GO" id="GO:0046677">
    <property type="term" value="P:response to antibiotic"/>
    <property type="evidence" value="ECO:0007669"/>
    <property type="project" value="UniProtKB-KW"/>
</dbReference>
<dbReference type="Gene3D" id="3.40.50.150">
    <property type="entry name" value="Vaccinia Virus protein VP39"/>
    <property type="match status" value="1"/>
</dbReference>
<dbReference type="InterPro" id="IPR056262">
    <property type="entry name" value="NpmA"/>
</dbReference>
<dbReference type="InterPro" id="IPR029063">
    <property type="entry name" value="SAM-dependent_MTases_sf"/>
</dbReference>
<dbReference type="NCBIfam" id="NF000030">
    <property type="entry name" value="16S_rRNA_NpmA"/>
    <property type="match status" value="1"/>
</dbReference>
<dbReference type="Pfam" id="PF24675">
    <property type="entry name" value="NpmA"/>
    <property type="match status" value="1"/>
</dbReference>
<dbReference type="SUPFAM" id="SSF53335">
    <property type="entry name" value="S-adenosyl-L-methionine-dependent methyltransferases"/>
    <property type="match status" value="1"/>
</dbReference>
<accession>A8C927</accession>
<proteinExistence type="evidence at protein level"/>
<gene>
    <name type="primary">npmA</name>
</gene>
<reference key="1">
    <citation type="journal article" date="2007" name="Antimicrob. Agents Chemother.">
        <title>Novel plasmid-mediated 16S rRNA m1A1408 methyltransferase, NpmA, found in a clinically isolated Escherichia coli strain resistant to structurally diverse aminoglycosides.</title>
        <authorList>
            <person name="Wachino J."/>
            <person name="Shibayama K."/>
            <person name="Kurokawa H."/>
            <person name="Kimura K."/>
            <person name="Yamane K."/>
            <person name="Suzuki S."/>
            <person name="Shibata N."/>
            <person name="Ike Y."/>
            <person name="Arakawa Y."/>
        </authorList>
    </citation>
    <scope>NUCLEOTIDE SEQUENCE [GENOMIC DNA]</scope>
    <scope>PROTEIN SEQUENCE OF 1-5</scope>
    <scope>FUNCTION</scope>
    <scope>CATALYTIC ACTIVITY</scope>
    <source>
        <strain>ARS3</strain>
    </source>
</reference>
<reference key="2">
    <citation type="journal article" date="2011" name="Protein Expr. Purif.">
        <title>Expression, purification and crystallization of adenosine 1408 aminoglycoside-resistance rRNA methyltransferases for structural studies.</title>
        <authorList>
            <person name="Zelinskaya N."/>
            <person name="Rankin C.R."/>
            <person name="Macmaster R."/>
            <person name="Savic M."/>
            <person name="Conn G.L."/>
        </authorList>
    </citation>
    <scope>FUNCTION</scope>
    <scope>CRYSTALLIZATION</scope>
</reference>
<reference key="3">
    <citation type="journal article" date="2010" name="Nucleic Acids Res.">
        <title>Structural insights into the function of aminoglycoside-resistance A1408 16S rRNA methyltransferases from antibiotic-producing and human pathogenic bacteria.</title>
        <authorList>
            <person name="Macmaster R."/>
            <person name="Zelinskaya N."/>
            <person name="Savic M."/>
            <person name="Rankin C.R."/>
            <person name="Conn G.L."/>
        </authorList>
    </citation>
    <scope>X-RAY CRYSTALLOGRAPHY (1.80 ANGSTROMS) IN COMPLEX WITH S-ADENOSYL-L-METHIONINE</scope>
</reference>
<reference key="4">
    <citation type="journal article" date="2011" name="Nucleic Acids Res.">
        <title>Structural basis for the methylation of A1408 in 16S rRNA by a panaminoglycoside resistance methyltransferase NpmA from a clinical isolate and analysis of the NpmA interactions with the 30S ribosomal subunit.</title>
        <authorList>
            <person name="Husain N."/>
            <person name="Obranic S."/>
            <person name="Koscinski L."/>
            <person name="Seetharaman J."/>
            <person name="Babic F."/>
            <person name="Bujnicki J.M."/>
            <person name="Maravic-Vlahovicek G."/>
            <person name="Sivaraman J."/>
        </authorList>
    </citation>
    <scope>X-RAY CRYSTALLOGRAPHY (1.68 ANGSTROMS) IN COMPLEX WITH S-ADENOSYL-L-HOMOCYSTEINE AND S-ADENOSYL-L-METHIONINE</scope>
    <scope>FUNCTION AS A METHYLTRANSFERASE</scope>
    <scope>MUTAGENESIS OF ASP-30; ASP-55; GLU-88; PRO-106; TRP-107; THR-109; PHE-177; SER-195; TRP-197; LYS-199; ARG-200 AND ARG-205</scope>
</reference>
<geneLocation type="plasmid">
    <name>pARS3</name>
</geneLocation>
<evidence type="ECO:0000269" key="1">
    <source>
    </source>
</evidence>
<evidence type="ECO:0000269" key="2">
    <source>
    </source>
</evidence>
<evidence type="ECO:0000269" key="3">
    <source>
    </source>
</evidence>
<evidence type="ECO:0000269" key="4">
    <source>
    </source>
</evidence>
<evidence type="ECO:0000305" key="5"/>
<evidence type="ECO:0007829" key="6">
    <source>
        <dbReference type="PDB" id="3MTE"/>
    </source>
</evidence>
<evidence type="ECO:0007829" key="7">
    <source>
        <dbReference type="PDB" id="3P2E"/>
    </source>
</evidence>
<feature type="chain" id="PRO_0000417015" description="16S rRNA (adenine(1408)-N(1))-methyltransferase">
    <location>
        <begin position="1"/>
        <end position="219"/>
    </location>
</feature>
<feature type="binding site" evidence="2 4">
    <location>
        <position position="32"/>
    </location>
    <ligand>
        <name>S-adenosyl-L-methionine</name>
        <dbReference type="ChEBI" id="CHEBI:59789"/>
    </ligand>
</feature>
<feature type="binding site" evidence="2 4">
    <location>
        <position position="38"/>
    </location>
    <ligand>
        <name>S-adenosyl-L-methionine</name>
        <dbReference type="ChEBI" id="CHEBI:59789"/>
    </ligand>
</feature>
<feature type="binding site" evidence="2 4">
    <location>
        <position position="55"/>
    </location>
    <ligand>
        <name>S-adenosyl-L-methionine</name>
        <dbReference type="ChEBI" id="CHEBI:59789"/>
    </ligand>
</feature>
<feature type="binding site">
    <location>
        <begin position="87"/>
        <end position="88"/>
    </location>
    <ligand>
        <name>S-adenosyl-L-methionine</name>
        <dbReference type="ChEBI" id="CHEBI:59789"/>
    </ligand>
</feature>
<feature type="binding site">
    <location>
        <begin position="104"/>
        <end position="109"/>
    </location>
    <ligand>
        <name>S-adenosyl-L-methionine</name>
        <dbReference type="ChEBI" id="CHEBI:59789"/>
    </ligand>
</feature>
<feature type="binding site">
    <location>
        <begin position="195"/>
        <end position="197"/>
    </location>
    <ligand>
        <name>S-adenosyl-L-methionine</name>
        <dbReference type="ChEBI" id="CHEBI:59789"/>
    </ligand>
</feature>
<feature type="mutagenesis site" description="Loss of kanamycin resistance. Strong decrease in methyltransferase activity." evidence="4">
    <original>D</original>
    <variation>A</variation>
    <location>
        <position position="30"/>
    </location>
</feature>
<feature type="mutagenesis site" description="Decrease in kanamycin resistance. Decrease in methyltransferase activity." evidence="4">
    <original>D</original>
    <variation>A</variation>
    <location>
        <position position="55"/>
    </location>
</feature>
<feature type="mutagenesis site" description="No change in kanamycin resistance." evidence="4">
    <original>E</original>
    <variation>A</variation>
    <location>
        <position position="88"/>
    </location>
</feature>
<feature type="mutagenesis site" description="No change in kanamycin resistance. Decrease in methyltransferase activity." evidence="4">
    <original>P</original>
    <variation>A</variation>
    <location>
        <position position="106"/>
    </location>
</feature>
<feature type="mutagenesis site" description="Loss of kanamycin resistance. Strong decrease in methyltransferase activity." evidence="4">
    <original>W</original>
    <variation>A</variation>
    <location>
        <position position="107"/>
    </location>
</feature>
<feature type="mutagenesis site" description="No change in kanamycin resistance." evidence="4">
    <original>T</original>
    <variation>A</variation>
    <location>
        <position position="109"/>
    </location>
</feature>
<feature type="mutagenesis site" description="No change in kanamycin resistance. Decrease in methyltransferase activity." evidence="4">
    <original>F</original>
    <variation>A</variation>
    <location>
        <position position="177"/>
    </location>
</feature>
<feature type="mutagenesis site" description="No change in kanamycin resistance." evidence="4">
    <original>S</original>
    <variation>A</variation>
    <location>
        <position position="195"/>
    </location>
</feature>
<feature type="mutagenesis site" description="Loss of kanamycin resistance. Strong decrease in methyltransferase activity." evidence="4">
    <original>W</original>
    <variation>A</variation>
    <location>
        <position position="197"/>
    </location>
</feature>
<feature type="mutagenesis site" description="No change in kanamycin resistance." evidence="4">
    <original>K</original>
    <variation>A</variation>
    <location>
        <position position="199"/>
    </location>
</feature>
<feature type="mutagenesis site" description="No change in kanamycin resistance." evidence="4">
    <original>R</original>
    <variation>A</variation>
    <location>
        <position position="200"/>
    </location>
</feature>
<feature type="mutagenesis site" description="No change in kanamycin resistance." evidence="4">
    <original>R</original>
    <variation>A</variation>
    <location>
        <position position="205"/>
    </location>
</feature>
<feature type="strand" evidence="7">
    <location>
        <begin position="3"/>
        <end position="5"/>
    </location>
</feature>
<feature type="strand" evidence="7">
    <location>
        <begin position="8"/>
        <end position="10"/>
    </location>
</feature>
<feature type="helix" evidence="7">
    <location>
        <begin position="14"/>
        <end position="21"/>
    </location>
</feature>
<feature type="strand" evidence="7">
    <location>
        <begin position="25"/>
        <end position="31"/>
    </location>
</feature>
<feature type="helix" evidence="7">
    <location>
        <begin position="37"/>
        <end position="44"/>
    </location>
</feature>
<feature type="strand" evidence="7">
    <location>
        <begin position="49"/>
        <end position="54"/>
    </location>
</feature>
<feature type="helix" evidence="7">
    <location>
        <begin position="59"/>
        <end position="61"/>
    </location>
</feature>
<feature type="helix" evidence="7">
    <location>
        <begin position="62"/>
        <end position="68"/>
    </location>
</feature>
<feature type="helix" evidence="7">
    <location>
        <begin position="72"/>
        <end position="74"/>
    </location>
</feature>
<feature type="strand" evidence="7">
    <location>
        <begin position="78"/>
        <end position="83"/>
    </location>
</feature>
<feature type="helix" evidence="6">
    <location>
        <begin position="87"/>
        <end position="89"/>
    </location>
</feature>
<feature type="helix" evidence="7">
    <location>
        <begin position="92"/>
        <end position="94"/>
    </location>
</feature>
<feature type="strand" evidence="7">
    <location>
        <begin position="98"/>
        <end position="105"/>
    </location>
</feature>
<feature type="helix" evidence="7">
    <location>
        <begin position="108"/>
        <end position="115"/>
    </location>
</feature>
<feature type="helix" evidence="7">
    <location>
        <begin position="119"/>
        <end position="126"/>
    </location>
</feature>
<feature type="strand" evidence="7">
    <location>
        <begin position="129"/>
        <end position="139"/>
    </location>
</feature>
<feature type="helix" evidence="6">
    <location>
        <begin position="144"/>
        <end position="152"/>
    </location>
</feature>
<feature type="helix" evidence="7">
    <location>
        <begin position="160"/>
        <end position="164"/>
    </location>
</feature>
<feature type="helix" evidence="7">
    <location>
        <begin position="166"/>
        <end position="174"/>
    </location>
</feature>
<feature type="strand" evidence="7">
    <location>
        <begin position="178"/>
        <end position="185"/>
    </location>
</feature>
<feature type="helix" evidence="7">
    <location>
        <begin position="187"/>
        <end position="190"/>
    </location>
</feature>
<feature type="helix" evidence="7">
    <location>
        <begin position="196"/>
        <end position="203"/>
    </location>
</feature>
<feature type="strand" evidence="7">
    <location>
        <begin position="209"/>
        <end position="215"/>
    </location>
</feature>
<comment type="function">
    <text evidence="1 3 4">Specifically methylates the N(1) position of adenine 1408 in 16S rRNA. Confers resistance to various aminoglycosides, including kanamycin, neomycin, apramycin, ribostamycin and gentamicin. Methylates only fully assembled 30S subunits.</text>
</comment>
<comment type="catalytic activity">
    <reaction evidence="1">
        <text>adenosine(1408) in 16S rRNA + S-adenosyl-L-methionine = N(1)-methyladenosine(1408) in 16S rRNA + S-adenosyl-L-homocysteine + H(+)</text>
        <dbReference type="Rhea" id="RHEA:42776"/>
        <dbReference type="Rhea" id="RHEA-COMP:10227"/>
        <dbReference type="Rhea" id="RHEA-COMP:10228"/>
        <dbReference type="ChEBI" id="CHEBI:15378"/>
        <dbReference type="ChEBI" id="CHEBI:57856"/>
        <dbReference type="ChEBI" id="CHEBI:59789"/>
        <dbReference type="ChEBI" id="CHEBI:74411"/>
        <dbReference type="ChEBI" id="CHEBI:74491"/>
        <dbReference type="EC" id="2.1.1.180"/>
    </reaction>
</comment>
<comment type="similarity">
    <text evidence="5">Belongs to the methyltransferase superfamily. Kanamycin-apramycin resistance family.</text>
</comment>
<sequence length="219" mass="24887">MLILKGTKTVDLSKDELTEIIGQFDRVHIDLGTGDGRNIYKLAINDQNTFYIGIDPVKENLFDISKKIIKKPSKGGLSNVVFVIAAAESLPFELKNIADSISILFPWGTLLEYVIKPNRDILSNVADLAKKEAHFEFVTTYSDSYEEAEIKKRGLPLLSKAYFLSEQYKAELSNSGFRIDDVKELDNEYVKQFNSLWAKRLAFGRKRSFFRVSGHVSKH</sequence>